<proteinExistence type="uncertain"/>
<protein>
    <recommendedName>
        <fullName>Putative uncharacterized protein YHR217C</fullName>
    </recommendedName>
</protein>
<evidence type="ECO:0000256" key="1">
    <source>
        <dbReference type="SAM" id="MobiDB-lite"/>
    </source>
</evidence>
<evidence type="ECO:0000305" key="2">
    <source>
    </source>
</evidence>
<comment type="caution">
    <text evidence="2">Product of a dubious gene prediction unlikely to encode a functional protein. Because of that it is not part of the S.cerevisiae S288c complete/reference proteome set.</text>
</comment>
<dbReference type="EMBL" id="U00029">
    <property type="protein sequence ID" value="AAB69740.1"/>
    <property type="molecule type" value="Genomic_DNA"/>
</dbReference>
<dbReference type="PIR" id="S48998">
    <property type="entry name" value="S48998"/>
</dbReference>
<dbReference type="STRING" id="4932.YHR217C"/>
<dbReference type="PaxDb" id="4932-YHR217C"/>
<dbReference type="EnsemblFungi" id="YHR217C_mRNA">
    <property type="protein sequence ID" value="YHR217C"/>
    <property type="gene ID" value="YHR217C"/>
</dbReference>
<dbReference type="AGR" id="SGD:S000001260"/>
<dbReference type="SGD" id="S000001260">
    <property type="gene designation" value="YHR217C"/>
</dbReference>
<dbReference type="GeneTree" id="ENSGT00940000180487"/>
<dbReference type="HOGENOM" id="CLU_1975930_0_0_1"/>
<dbReference type="OMA" id="PTHCTVV"/>
<gene>
    <name type="ordered locus">YHR217C</name>
</gene>
<sequence length="153" mass="17081">MSLRPCLTPSSMQYSDIYIHTPHPHPHPHPHTPTHTHPHTPTPTPHPHPHTPHPHTTPTPTPHHTHTPHTTLSNLSLNLPSHYPTSPLVTLPHSTIPLPTTIHLSTYYYHPPPIITVTLQLPISNSTTITLLLPYHPPCPTHCTVVLPSILKR</sequence>
<feature type="chain" id="PRO_0000202946" description="Putative uncharacterized protein YHR217C">
    <location>
        <begin position="1"/>
        <end position="153"/>
    </location>
</feature>
<feature type="region of interest" description="Disordered" evidence="1">
    <location>
        <begin position="17"/>
        <end position="78"/>
    </location>
</feature>
<feature type="compositionally biased region" description="Basic residues" evidence="1">
    <location>
        <begin position="22"/>
        <end position="38"/>
    </location>
</feature>
<organism>
    <name type="scientific">Saccharomyces cerevisiae (strain ATCC 204508 / S288c)</name>
    <name type="common">Baker's yeast</name>
    <dbReference type="NCBI Taxonomy" id="559292"/>
    <lineage>
        <taxon>Eukaryota</taxon>
        <taxon>Fungi</taxon>
        <taxon>Dikarya</taxon>
        <taxon>Ascomycota</taxon>
        <taxon>Saccharomycotina</taxon>
        <taxon>Saccharomycetes</taxon>
        <taxon>Saccharomycetales</taxon>
        <taxon>Saccharomycetaceae</taxon>
        <taxon>Saccharomyces</taxon>
    </lineage>
</organism>
<accession>P38898</accession>
<reference key="1">
    <citation type="journal article" date="1994" name="Science">
        <title>Complete nucleotide sequence of Saccharomyces cerevisiae chromosome VIII.</title>
        <authorList>
            <person name="Johnston M."/>
            <person name="Andrews S."/>
            <person name="Brinkman R."/>
            <person name="Cooper J."/>
            <person name="Ding H."/>
            <person name="Dover J."/>
            <person name="Du Z."/>
            <person name="Favello A."/>
            <person name="Fulton L."/>
            <person name="Gattung S."/>
            <person name="Geisel C."/>
            <person name="Kirsten J."/>
            <person name="Kucaba T."/>
            <person name="Hillier L.W."/>
            <person name="Jier M."/>
            <person name="Johnston L."/>
            <person name="Langston Y."/>
            <person name="Latreille P."/>
            <person name="Louis E.J."/>
            <person name="Macri C."/>
            <person name="Mardis E."/>
            <person name="Menezes S."/>
            <person name="Mouser L."/>
            <person name="Nhan M."/>
            <person name="Rifkin L."/>
            <person name="Riles L."/>
            <person name="St Peter H."/>
            <person name="Trevaskis E."/>
            <person name="Vaughan K."/>
            <person name="Vignati D."/>
            <person name="Wilcox L."/>
            <person name="Wohldman P."/>
            <person name="Waterston R."/>
            <person name="Wilson R."/>
            <person name="Vaudin M."/>
        </authorList>
    </citation>
    <scope>NUCLEOTIDE SEQUENCE [LARGE SCALE GENOMIC DNA]</scope>
    <source>
        <strain>ATCC 204508 / S288c</strain>
    </source>
</reference>
<reference key="2">
    <citation type="journal article" date="2014" name="G3 (Bethesda)">
        <title>The reference genome sequence of Saccharomyces cerevisiae: Then and now.</title>
        <authorList>
            <person name="Engel S.R."/>
            <person name="Dietrich F.S."/>
            <person name="Fisk D.G."/>
            <person name="Binkley G."/>
            <person name="Balakrishnan R."/>
            <person name="Costanzo M.C."/>
            <person name="Dwight S.S."/>
            <person name="Hitz B.C."/>
            <person name="Karra K."/>
            <person name="Nash R.S."/>
            <person name="Weng S."/>
            <person name="Wong E.D."/>
            <person name="Lloyd P."/>
            <person name="Skrzypek M.S."/>
            <person name="Miyasato S.R."/>
            <person name="Simison M."/>
            <person name="Cherry J.M."/>
        </authorList>
    </citation>
    <scope>GENOME REANNOTATION</scope>
    <source>
        <strain>ATCC 204508 / S288c</strain>
    </source>
</reference>
<name>YH17_YEAST</name>